<evidence type="ECO:0000255" key="1">
    <source>
        <dbReference type="HAMAP-Rule" id="MF_00418"/>
    </source>
</evidence>
<evidence type="ECO:0000305" key="2"/>
<feature type="chain" id="PRO_1000124037" description="4-hydroxy-tetrahydrodipicolinate synthase">
    <location>
        <begin position="1"/>
        <end position="290"/>
    </location>
</feature>
<feature type="active site" description="Proton donor/acceptor" evidence="1">
    <location>
        <position position="132"/>
    </location>
</feature>
<feature type="active site" description="Schiff-base intermediate with substrate" evidence="1">
    <location>
        <position position="160"/>
    </location>
</feature>
<feature type="binding site" evidence="1">
    <location>
        <position position="44"/>
    </location>
    <ligand>
        <name>pyruvate</name>
        <dbReference type="ChEBI" id="CHEBI:15361"/>
    </ligand>
</feature>
<feature type="binding site" evidence="1">
    <location>
        <position position="202"/>
    </location>
    <ligand>
        <name>pyruvate</name>
        <dbReference type="ChEBI" id="CHEBI:15361"/>
    </ligand>
</feature>
<feature type="site" description="Part of a proton relay during catalysis" evidence="1">
    <location>
        <position position="43"/>
    </location>
</feature>
<feature type="site" description="Part of a proton relay during catalysis" evidence="1">
    <location>
        <position position="106"/>
    </location>
</feature>
<dbReference type="EC" id="4.3.3.7" evidence="1"/>
<dbReference type="EMBL" id="CP001089">
    <property type="protein sequence ID" value="ACD96749.1"/>
    <property type="molecule type" value="Genomic_DNA"/>
</dbReference>
<dbReference type="RefSeq" id="WP_012471074.1">
    <property type="nucleotide sequence ID" value="NC_010814.1"/>
</dbReference>
<dbReference type="SMR" id="B3E936"/>
<dbReference type="STRING" id="398767.Glov_3043"/>
<dbReference type="KEGG" id="glo:Glov_3043"/>
<dbReference type="eggNOG" id="COG0329">
    <property type="taxonomic scope" value="Bacteria"/>
</dbReference>
<dbReference type="HOGENOM" id="CLU_049343_7_1_7"/>
<dbReference type="OrthoDB" id="9782828at2"/>
<dbReference type="UniPathway" id="UPA00034">
    <property type="reaction ID" value="UER00017"/>
</dbReference>
<dbReference type="Proteomes" id="UP000002420">
    <property type="component" value="Chromosome"/>
</dbReference>
<dbReference type="GO" id="GO:0005829">
    <property type="term" value="C:cytosol"/>
    <property type="evidence" value="ECO:0007669"/>
    <property type="project" value="TreeGrafter"/>
</dbReference>
<dbReference type="GO" id="GO:0008840">
    <property type="term" value="F:4-hydroxy-tetrahydrodipicolinate synthase activity"/>
    <property type="evidence" value="ECO:0007669"/>
    <property type="project" value="UniProtKB-UniRule"/>
</dbReference>
<dbReference type="GO" id="GO:0019877">
    <property type="term" value="P:diaminopimelate biosynthetic process"/>
    <property type="evidence" value="ECO:0007669"/>
    <property type="project" value="UniProtKB-UniRule"/>
</dbReference>
<dbReference type="GO" id="GO:0009089">
    <property type="term" value="P:lysine biosynthetic process via diaminopimelate"/>
    <property type="evidence" value="ECO:0007669"/>
    <property type="project" value="UniProtKB-UniRule"/>
</dbReference>
<dbReference type="CDD" id="cd00950">
    <property type="entry name" value="DHDPS"/>
    <property type="match status" value="1"/>
</dbReference>
<dbReference type="Gene3D" id="3.20.20.70">
    <property type="entry name" value="Aldolase class I"/>
    <property type="match status" value="1"/>
</dbReference>
<dbReference type="HAMAP" id="MF_00418">
    <property type="entry name" value="DapA"/>
    <property type="match status" value="1"/>
</dbReference>
<dbReference type="InterPro" id="IPR013785">
    <property type="entry name" value="Aldolase_TIM"/>
</dbReference>
<dbReference type="InterPro" id="IPR005263">
    <property type="entry name" value="DapA"/>
</dbReference>
<dbReference type="InterPro" id="IPR002220">
    <property type="entry name" value="DapA-like"/>
</dbReference>
<dbReference type="InterPro" id="IPR020625">
    <property type="entry name" value="Schiff_base-form_aldolases_AS"/>
</dbReference>
<dbReference type="InterPro" id="IPR020624">
    <property type="entry name" value="Schiff_base-form_aldolases_CS"/>
</dbReference>
<dbReference type="NCBIfam" id="TIGR00674">
    <property type="entry name" value="dapA"/>
    <property type="match status" value="1"/>
</dbReference>
<dbReference type="PANTHER" id="PTHR12128:SF66">
    <property type="entry name" value="4-HYDROXY-2-OXOGLUTARATE ALDOLASE, MITOCHONDRIAL"/>
    <property type="match status" value="1"/>
</dbReference>
<dbReference type="PANTHER" id="PTHR12128">
    <property type="entry name" value="DIHYDRODIPICOLINATE SYNTHASE"/>
    <property type="match status" value="1"/>
</dbReference>
<dbReference type="Pfam" id="PF00701">
    <property type="entry name" value="DHDPS"/>
    <property type="match status" value="1"/>
</dbReference>
<dbReference type="PIRSF" id="PIRSF001365">
    <property type="entry name" value="DHDPS"/>
    <property type="match status" value="1"/>
</dbReference>
<dbReference type="PRINTS" id="PR00146">
    <property type="entry name" value="DHPICSNTHASE"/>
</dbReference>
<dbReference type="SMART" id="SM01130">
    <property type="entry name" value="DHDPS"/>
    <property type="match status" value="1"/>
</dbReference>
<dbReference type="SUPFAM" id="SSF51569">
    <property type="entry name" value="Aldolase"/>
    <property type="match status" value="1"/>
</dbReference>
<dbReference type="PROSITE" id="PS00665">
    <property type="entry name" value="DHDPS_1"/>
    <property type="match status" value="1"/>
</dbReference>
<dbReference type="PROSITE" id="PS00666">
    <property type="entry name" value="DHDPS_2"/>
    <property type="match status" value="1"/>
</dbReference>
<keyword id="KW-0028">Amino-acid biosynthesis</keyword>
<keyword id="KW-0963">Cytoplasm</keyword>
<keyword id="KW-0220">Diaminopimelate biosynthesis</keyword>
<keyword id="KW-0456">Lyase</keyword>
<keyword id="KW-0457">Lysine biosynthesis</keyword>
<keyword id="KW-1185">Reference proteome</keyword>
<keyword id="KW-0704">Schiff base</keyword>
<name>DAPA_TRIL1</name>
<organism>
    <name type="scientific">Trichlorobacter lovleyi (strain ATCC BAA-1151 / DSM 17278 / SZ)</name>
    <name type="common">Geobacter lovleyi</name>
    <dbReference type="NCBI Taxonomy" id="398767"/>
    <lineage>
        <taxon>Bacteria</taxon>
        <taxon>Pseudomonadati</taxon>
        <taxon>Thermodesulfobacteriota</taxon>
        <taxon>Desulfuromonadia</taxon>
        <taxon>Geobacterales</taxon>
        <taxon>Geobacteraceae</taxon>
        <taxon>Trichlorobacter</taxon>
    </lineage>
</organism>
<protein>
    <recommendedName>
        <fullName evidence="1">4-hydroxy-tetrahydrodipicolinate synthase</fullName>
        <shortName evidence="1">HTPA synthase</shortName>
        <ecNumber evidence="1">4.3.3.7</ecNumber>
    </recommendedName>
</protein>
<proteinExistence type="inferred from homology"/>
<gene>
    <name evidence="1" type="primary">dapA</name>
    <name type="ordered locus">Glov_3043</name>
</gene>
<comment type="function">
    <text evidence="1">Catalyzes the condensation of (S)-aspartate-beta-semialdehyde [(S)-ASA] and pyruvate to 4-hydroxy-tetrahydrodipicolinate (HTPA).</text>
</comment>
<comment type="catalytic activity">
    <reaction evidence="1">
        <text>L-aspartate 4-semialdehyde + pyruvate = (2S,4S)-4-hydroxy-2,3,4,5-tetrahydrodipicolinate + H2O + H(+)</text>
        <dbReference type="Rhea" id="RHEA:34171"/>
        <dbReference type="ChEBI" id="CHEBI:15361"/>
        <dbReference type="ChEBI" id="CHEBI:15377"/>
        <dbReference type="ChEBI" id="CHEBI:15378"/>
        <dbReference type="ChEBI" id="CHEBI:67139"/>
        <dbReference type="ChEBI" id="CHEBI:537519"/>
        <dbReference type="EC" id="4.3.3.7"/>
    </reaction>
</comment>
<comment type="pathway">
    <text evidence="1">Amino-acid biosynthesis; L-lysine biosynthesis via DAP pathway; (S)-tetrahydrodipicolinate from L-aspartate: step 3/4.</text>
</comment>
<comment type="subunit">
    <text evidence="1">Homotetramer; dimer of dimers.</text>
</comment>
<comment type="subcellular location">
    <subcellularLocation>
        <location evidence="1">Cytoplasm</location>
    </subcellularLocation>
</comment>
<comment type="similarity">
    <text evidence="1">Belongs to the DapA family.</text>
</comment>
<comment type="caution">
    <text evidence="2">Was originally thought to be a dihydrodipicolinate synthase (DHDPS), catalyzing the condensation of (S)-aspartate-beta-semialdehyde [(S)-ASA] and pyruvate to dihydrodipicolinate (DHDP). However, it was shown in E.coli that the product of the enzymatic reaction is not dihydrodipicolinate but in fact (4S)-4-hydroxy-2,3,4,5-tetrahydro-(2S)-dipicolinic acid (HTPA), and that the consecutive dehydration reaction leading to DHDP is not spontaneous but catalyzed by DapB.</text>
</comment>
<sequence length="290" mass="31006">MFKGSIVAIVTPFNNGAVDEKKLRELVDFQIENGTDAIVACGTTGESSTLDNEEHLNVIKIVFDQAKGRVPVIAGTGSNSTAEAIHLTREAKEIGVAGVLLVTPYYNKPTQEGLYLHYTAIADAVEIPQILYNVPGRTGVNLLPETVARLAGHKNIVAIKEATGSLQQASEVMALCGDQIDVFSGDDFITFPMMACGAKGVISVTANIMPKAIGDLTDAFYAGDLEKARQLHLDTLKISNAMFIESNPVPVKTALALMGKCSDEVRLPLAPMSAANKAKLEAIMKEYKLI</sequence>
<reference key="1">
    <citation type="submission" date="2008-05" db="EMBL/GenBank/DDBJ databases">
        <title>Complete sequence of chromosome of Geobacter lovleyi SZ.</title>
        <authorList>
            <consortium name="US DOE Joint Genome Institute"/>
            <person name="Lucas S."/>
            <person name="Copeland A."/>
            <person name="Lapidus A."/>
            <person name="Glavina del Rio T."/>
            <person name="Dalin E."/>
            <person name="Tice H."/>
            <person name="Bruce D."/>
            <person name="Goodwin L."/>
            <person name="Pitluck S."/>
            <person name="Chertkov O."/>
            <person name="Meincke L."/>
            <person name="Brettin T."/>
            <person name="Detter J.C."/>
            <person name="Han C."/>
            <person name="Tapia R."/>
            <person name="Kuske C.R."/>
            <person name="Schmutz J."/>
            <person name="Larimer F."/>
            <person name="Land M."/>
            <person name="Hauser L."/>
            <person name="Kyrpides N."/>
            <person name="Mikhailova N."/>
            <person name="Sung Y."/>
            <person name="Fletcher K.E."/>
            <person name="Ritalahti K.M."/>
            <person name="Loeffler F.E."/>
            <person name="Richardson P."/>
        </authorList>
    </citation>
    <scope>NUCLEOTIDE SEQUENCE [LARGE SCALE GENOMIC DNA]</scope>
    <source>
        <strain>ATCC BAA-1151 / DSM 17278 / SZ</strain>
    </source>
</reference>
<accession>B3E936</accession>